<dbReference type="EC" id="3.5.1.105" evidence="1"/>
<dbReference type="EMBL" id="CU928160">
    <property type="protein sequence ID" value="CAQ98650.1"/>
    <property type="molecule type" value="Genomic_DNA"/>
</dbReference>
<dbReference type="RefSeq" id="WP_000440468.1">
    <property type="nucleotide sequence ID" value="NC_011741.1"/>
</dbReference>
<dbReference type="SMR" id="B7M1E5"/>
<dbReference type="KEGG" id="ecr:ECIAI1_1793"/>
<dbReference type="HOGENOM" id="CLU_064244_4_1_6"/>
<dbReference type="UniPathway" id="UPA00349"/>
<dbReference type="GO" id="GO:0005737">
    <property type="term" value="C:cytoplasm"/>
    <property type="evidence" value="ECO:0007669"/>
    <property type="project" value="UniProtKB-SubCell"/>
</dbReference>
<dbReference type="GO" id="GO:0036311">
    <property type="term" value="F:chitin disaccharide deacetylase activity"/>
    <property type="evidence" value="ECO:0007669"/>
    <property type="project" value="UniProtKB-UniRule"/>
</dbReference>
<dbReference type="GO" id="GO:0019213">
    <property type="term" value="F:deacetylase activity"/>
    <property type="evidence" value="ECO:0007669"/>
    <property type="project" value="TreeGrafter"/>
</dbReference>
<dbReference type="GO" id="GO:0046872">
    <property type="term" value="F:metal ion binding"/>
    <property type="evidence" value="ECO:0007669"/>
    <property type="project" value="UniProtKB-KW"/>
</dbReference>
<dbReference type="GO" id="GO:0006032">
    <property type="term" value="P:chitin catabolic process"/>
    <property type="evidence" value="ECO:0007669"/>
    <property type="project" value="UniProtKB-UniPathway"/>
</dbReference>
<dbReference type="GO" id="GO:0052777">
    <property type="term" value="P:diacetylchitobiose catabolic process"/>
    <property type="evidence" value="ECO:0007669"/>
    <property type="project" value="UniProtKB-UniRule"/>
</dbReference>
<dbReference type="GO" id="GO:0000272">
    <property type="term" value="P:polysaccharide catabolic process"/>
    <property type="evidence" value="ECO:0007669"/>
    <property type="project" value="UniProtKB-UniRule"/>
</dbReference>
<dbReference type="CDD" id="cd10803">
    <property type="entry name" value="YdjC_EF3048_like"/>
    <property type="match status" value="1"/>
</dbReference>
<dbReference type="FunFam" id="3.20.20.370:FF:000001">
    <property type="entry name" value="Chitooligosaccharide deacetylase"/>
    <property type="match status" value="1"/>
</dbReference>
<dbReference type="Gene3D" id="3.20.20.370">
    <property type="entry name" value="Glycoside hydrolase/deacetylase"/>
    <property type="match status" value="1"/>
</dbReference>
<dbReference type="HAMAP" id="MF_01246">
    <property type="entry name" value="COD"/>
    <property type="match status" value="1"/>
</dbReference>
<dbReference type="InterPro" id="IPR022948">
    <property type="entry name" value="COD_ChbG_bac"/>
</dbReference>
<dbReference type="InterPro" id="IPR011330">
    <property type="entry name" value="Glyco_hydro/deAcase_b/a-brl"/>
</dbReference>
<dbReference type="InterPro" id="IPR006879">
    <property type="entry name" value="YdjC-like"/>
</dbReference>
<dbReference type="NCBIfam" id="NF002559">
    <property type="entry name" value="PRK02134.1"/>
    <property type="match status" value="1"/>
</dbReference>
<dbReference type="PANTHER" id="PTHR31609:SF1">
    <property type="entry name" value="CARBOHYDRATE DEACETYLASE"/>
    <property type="match status" value="1"/>
</dbReference>
<dbReference type="PANTHER" id="PTHR31609">
    <property type="entry name" value="YDJC DEACETYLASE FAMILY MEMBER"/>
    <property type="match status" value="1"/>
</dbReference>
<dbReference type="Pfam" id="PF04794">
    <property type="entry name" value="YdjC"/>
    <property type="match status" value="1"/>
</dbReference>
<dbReference type="SUPFAM" id="SSF88713">
    <property type="entry name" value="Glycoside hydrolase/deacetylase"/>
    <property type="match status" value="1"/>
</dbReference>
<protein>
    <recommendedName>
        <fullName evidence="1">Chitooligosaccharide deacetylase</fullName>
        <shortName evidence="1">COD</shortName>
        <ecNumber evidence="1">3.5.1.105</ecNumber>
    </recommendedName>
    <alternativeName>
        <fullName evidence="1">Chitin disaccharide deacetylase</fullName>
    </alternativeName>
    <alternativeName>
        <fullName evidence="1">Chitobiose deacetylase</fullName>
    </alternativeName>
    <alternativeName>
        <fullName evidence="1">Chitobiose-6P deacetylase</fullName>
    </alternativeName>
    <alternativeName>
        <fullName evidence="1">Chitotriose deacetylase</fullName>
    </alternativeName>
    <alternativeName>
        <fullName evidence="1">Chitotriose-6P deacetylase</fullName>
    </alternativeName>
</protein>
<gene>
    <name evidence="1" type="primary">chbG</name>
    <name type="ordered locus">ECIAI1_1793</name>
</gene>
<feature type="chain" id="PRO_1000139822" description="Chitooligosaccharide deacetylase">
    <location>
        <begin position="1"/>
        <end position="252"/>
    </location>
</feature>
<feature type="binding site" evidence="1">
    <location>
        <position position="61"/>
    </location>
    <ligand>
        <name>Mg(2+)</name>
        <dbReference type="ChEBI" id="CHEBI:18420"/>
    </ligand>
</feature>
<feature type="binding site" evidence="1">
    <location>
        <position position="125"/>
    </location>
    <ligand>
        <name>Mg(2+)</name>
        <dbReference type="ChEBI" id="CHEBI:18420"/>
    </ligand>
</feature>
<organism>
    <name type="scientific">Escherichia coli O8 (strain IAI1)</name>
    <dbReference type="NCBI Taxonomy" id="585034"/>
    <lineage>
        <taxon>Bacteria</taxon>
        <taxon>Pseudomonadati</taxon>
        <taxon>Pseudomonadota</taxon>
        <taxon>Gammaproteobacteria</taxon>
        <taxon>Enterobacterales</taxon>
        <taxon>Enterobacteriaceae</taxon>
        <taxon>Escherichia</taxon>
    </lineage>
</organism>
<name>CHBG_ECO8A</name>
<proteinExistence type="inferred from homology"/>
<sequence length="252" mass="28015">MERLLIVNADDFGLSKGQNYGIIEACRNGIVTSTTALVNGQAIDHAVQLSRDEPSLAIGMHFVLTMGKPLTAMPGLTRDGVLGKWIWQLAEEDALPLEEITQELASQYLRFIELFGRKPTHLDSHHHVHMFPQIFPIVVRFAAEEGIALRIDRQPLSNSGDLPANLRSSQGFSSAFYGEEISEALFLQVLDDASHRGDLSLEVMCHPAFIDNTIRQSAYCFPRLTELEVLTSASLKYAIAERGYRLGSYLNV</sequence>
<accession>B7M1E5</accession>
<reference key="1">
    <citation type="journal article" date="2009" name="PLoS Genet.">
        <title>Organised genome dynamics in the Escherichia coli species results in highly diverse adaptive paths.</title>
        <authorList>
            <person name="Touchon M."/>
            <person name="Hoede C."/>
            <person name="Tenaillon O."/>
            <person name="Barbe V."/>
            <person name="Baeriswyl S."/>
            <person name="Bidet P."/>
            <person name="Bingen E."/>
            <person name="Bonacorsi S."/>
            <person name="Bouchier C."/>
            <person name="Bouvet O."/>
            <person name="Calteau A."/>
            <person name="Chiapello H."/>
            <person name="Clermont O."/>
            <person name="Cruveiller S."/>
            <person name="Danchin A."/>
            <person name="Diard M."/>
            <person name="Dossat C."/>
            <person name="Karoui M.E."/>
            <person name="Frapy E."/>
            <person name="Garry L."/>
            <person name="Ghigo J.M."/>
            <person name="Gilles A.M."/>
            <person name="Johnson J."/>
            <person name="Le Bouguenec C."/>
            <person name="Lescat M."/>
            <person name="Mangenot S."/>
            <person name="Martinez-Jehanne V."/>
            <person name="Matic I."/>
            <person name="Nassif X."/>
            <person name="Oztas S."/>
            <person name="Petit M.A."/>
            <person name="Pichon C."/>
            <person name="Rouy Z."/>
            <person name="Ruf C.S."/>
            <person name="Schneider D."/>
            <person name="Tourret J."/>
            <person name="Vacherie B."/>
            <person name="Vallenet D."/>
            <person name="Medigue C."/>
            <person name="Rocha E.P.C."/>
            <person name="Denamur E."/>
        </authorList>
    </citation>
    <scope>NUCLEOTIDE SEQUENCE [LARGE SCALE GENOMIC DNA]</scope>
    <source>
        <strain>IAI1</strain>
    </source>
</reference>
<keyword id="KW-0119">Carbohydrate metabolism</keyword>
<keyword id="KW-0146">Chitin degradation</keyword>
<keyword id="KW-0963">Cytoplasm</keyword>
<keyword id="KW-0378">Hydrolase</keyword>
<keyword id="KW-0460">Magnesium</keyword>
<keyword id="KW-0479">Metal-binding</keyword>
<keyword id="KW-0624">Polysaccharide degradation</keyword>
<evidence type="ECO:0000255" key="1">
    <source>
        <dbReference type="HAMAP-Rule" id="MF_01246"/>
    </source>
</evidence>
<comment type="function">
    <text evidence="1">Involved in the degradation of chitin. ChbG is essential for growth on the acetylated chitooligosaccharides chitobiose and chitotriose but is dispensable for growth on cellobiose and chitosan dimer, the deacetylated form of chitobiose. Deacetylation of chitobiose-6-P and chitotriose-6-P is necessary for both the activation of the chb promoter by the regulatory protein ChbR and the hydrolysis of phosphorylated beta-glucosides by the phospho-beta-glucosidase ChbF. Catalyzes the removal of only one acetyl group from chitobiose-6-P to yield monoacetylchitobiose-6-P, the inducer of ChbR and the substrate of ChbF.</text>
</comment>
<comment type="catalytic activity">
    <reaction evidence="1">
        <text>N,N'-diacetylchitobiose + H2O = N-acetyl-beta-D-glucosaminyl-(1-&gt;4)-D-glucosamine + acetate</text>
        <dbReference type="Rhea" id="RHEA:27469"/>
        <dbReference type="ChEBI" id="CHEBI:15377"/>
        <dbReference type="ChEBI" id="CHEBI:28681"/>
        <dbReference type="ChEBI" id="CHEBI:30089"/>
        <dbReference type="ChEBI" id="CHEBI:59910"/>
        <dbReference type="EC" id="3.5.1.105"/>
    </reaction>
</comment>
<comment type="catalytic activity">
    <reaction evidence="1">
        <text>diacetylchitobiose-6'-phosphate + H2O = N'-monoacetylchitobiose-6'-phosphate + acetate</text>
        <dbReference type="Rhea" id="RHEA:35083"/>
        <dbReference type="ChEBI" id="CHEBI:15377"/>
        <dbReference type="ChEBI" id="CHEBI:30089"/>
        <dbReference type="ChEBI" id="CHEBI:64883"/>
        <dbReference type="ChEBI" id="CHEBI:71315"/>
    </reaction>
</comment>
<comment type="cofactor">
    <cofactor evidence="1">
        <name>Mg(2+)</name>
        <dbReference type="ChEBI" id="CHEBI:18420"/>
    </cofactor>
</comment>
<comment type="pathway">
    <text evidence="1">Glycan degradation; chitin degradation.</text>
</comment>
<comment type="subunit">
    <text evidence="1">Homodimer.</text>
</comment>
<comment type="subcellular location">
    <subcellularLocation>
        <location evidence="1">Cytoplasm</location>
    </subcellularLocation>
</comment>
<comment type="similarity">
    <text evidence="1">Belongs to the YdjC deacetylase family. ChbG subfamily.</text>
</comment>